<gene>
    <name evidence="1" type="primary">cysS</name>
    <name type="ordered locus">SPs1673</name>
</gene>
<sequence>MIKIYDTMTRSLRKFVPLTENTVNMYVCGPTVYNYIHIGNARSAVAFDTIRRYFEYTGYQVNYISNFTDIDDKIIKAATQAGVSPKELSDRFIAAFIEDTKALGVKPATQNPRVMDYIAEIISFVESLIEKDFAYEADGDVYFRVEKSEHYAKLANKTLSELEVGASGRTDAETALKENPLDFALWKSAKAGEVSWDSPWGFGRPGWHIECSVMATEILGDTIDIHGGGADLEFPHHTNEIAQSEAKTGKTFANYWMHNGFVTVDNEKMSKSLGNFVTVHDMLQTVDGQVLRFFLATQQYRKPINFTEKAIHDAEINLKYLKNTLQQPLTETADEQELKQFVIAFQDAMDDDFNTANGITVVFDMAKWINSGSYTEPVKSAFEKMLAVFGIIFEEEVLEVDIEALIAKRQEARANRDFATADAIRDQLAAQGIKLLDTKDGVRWLRD</sequence>
<organism>
    <name type="scientific">Streptococcus pyogenes serotype M3 (strain SSI-1)</name>
    <dbReference type="NCBI Taxonomy" id="193567"/>
    <lineage>
        <taxon>Bacteria</taxon>
        <taxon>Bacillati</taxon>
        <taxon>Bacillota</taxon>
        <taxon>Bacilli</taxon>
        <taxon>Lactobacillales</taxon>
        <taxon>Streptococcaceae</taxon>
        <taxon>Streptococcus</taxon>
    </lineage>
</organism>
<comment type="catalytic activity">
    <reaction evidence="1">
        <text>tRNA(Cys) + L-cysteine + ATP = L-cysteinyl-tRNA(Cys) + AMP + diphosphate</text>
        <dbReference type="Rhea" id="RHEA:17773"/>
        <dbReference type="Rhea" id="RHEA-COMP:9661"/>
        <dbReference type="Rhea" id="RHEA-COMP:9679"/>
        <dbReference type="ChEBI" id="CHEBI:30616"/>
        <dbReference type="ChEBI" id="CHEBI:33019"/>
        <dbReference type="ChEBI" id="CHEBI:35235"/>
        <dbReference type="ChEBI" id="CHEBI:78442"/>
        <dbReference type="ChEBI" id="CHEBI:78517"/>
        <dbReference type="ChEBI" id="CHEBI:456215"/>
        <dbReference type="EC" id="6.1.1.16"/>
    </reaction>
</comment>
<comment type="cofactor">
    <cofactor evidence="1">
        <name>Zn(2+)</name>
        <dbReference type="ChEBI" id="CHEBI:29105"/>
    </cofactor>
    <text evidence="1">Binds 1 zinc ion per subunit.</text>
</comment>
<comment type="subunit">
    <text evidence="1">Monomer.</text>
</comment>
<comment type="subcellular location">
    <subcellularLocation>
        <location evidence="1">Cytoplasm</location>
    </subcellularLocation>
</comment>
<comment type="similarity">
    <text evidence="1">Belongs to the class-I aminoacyl-tRNA synthetase family.</text>
</comment>
<reference key="1">
    <citation type="journal article" date="2003" name="Genome Res.">
        <title>Genome sequence of an M3 strain of Streptococcus pyogenes reveals a large-scale genomic rearrangement in invasive strains and new insights into phage evolution.</title>
        <authorList>
            <person name="Nakagawa I."/>
            <person name="Kurokawa K."/>
            <person name="Yamashita A."/>
            <person name="Nakata M."/>
            <person name="Tomiyasu Y."/>
            <person name="Okahashi N."/>
            <person name="Kawabata S."/>
            <person name="Yamazaki K."/>
            <person name="Shiba T."/>
            <person name="Yasunaga T."/>
            <person name="Hayashi H."/>
            <person name="Hattori M."/>
            <person name="Hamada S."/>
        </authorList>
    </citation>
    <scope>NUCLEOTIDE SEQUENCE [LARGE SCALE GENOMIC DNA]</scope>
    <source>
        <strain>SSI-1</strain>
    </source>
</reference>
<evidence type="ECO:0000255" key="1">
    <source>
        <dbReference type="HAMAP-Rule" id="MF_00041"/>
    </source>
</evidence>
<feature type="chain" id="PRO_0000411606" description="Cysteine--tRNA ligase">
    <location>
        <begin position="1"/>
        <end position="447"/>
    </location>
</feature>
<feature type="short sequence motif" description="'HIGH' region">
    <location>
        <begin position="30"/>
        <end position="40"/>
    </location>
</feature>
<feature type="short sequence motif" description="'KMSKS' region">
    <location>
        <begin position="268"/>
        <end position="272"/>
    </location>
</feature>
<feature type="binding site" evidence="1">
    <location>
        <position position="28"/>
    </location>
    <ligand>
        <name>Zn(2+)</name>
        <dbReference type="ChEBI" id="CHEBI:29105"/>
    </ligand>
</feature>
<feature type="binding site" evidence="1">
    <location>
        <position position="211"/>
    </location>
    <ligand>
        <name>Zn(2+)</name>
        <dbReference type="ChEBI" id="CHEBI:29105"/>
    </ligand>
</feature>
<feature type="binding site" evidence="1">
    <location>
        <position position="236"/>
    </location>
    <ligand>
        <name>Zn(2+)</name>
        <dbReference type="ChEBI" id="CHEBI:29105"/>
    </ligand>
</feature>
<feature type="binding site" evidence="1">
    <location>
        <position position="240"/>
    </location>
    <ligand>
        <name>Zn(2+)</name>
        <dbReference type="ChEBI" id="CHEBI:29105"/>
    </ligand>
</feature>
<feature type="binding site" evidence="1">
    <location>
        <position position="271"/>
    </location>
    <ligand>
        <name>ATP</name>
        <dbReference type="ChEBI" id="CHEBI:30616"/>
    </ligand>
</feature>
<keyword id="KW-0030">Aminoacyl-tRNA synthetase</keyword>
<keyword id="KW-0067">ATP-binding</keyword>
<keyword id="KW-0963">Cytoplasm</keyword>
<keyword id="KW-0436">Ligase</keyword>
<keyword id="KW-0479">Metal-binding</keyword>
<keyword id="KW-0547">Nucleotide-binding</keyword>
<keyword id="KW-0648">Protein biosynthesis</keyword>
<keyword id="KW-0862">Zinc</keyword>
<dbReference type="EC" id="6.1.1.16" evidence="1"/>
<dbReference type="EMBL" id="BA000034">
    <property type="protein sequence ID" value="BAC64768.1"/>
    <property type="molecule type" value="Genomic_DNA"/>
</dbReference>
<dbReference type="RefSeq" id="WP_011055013.1">
    <property type="nucleotide sequence ID" value="NC_004606.1"/>
</dbReference>
<dbReference type="SMR" id="P0DG33"/>
<dbReference type="KEGG" id="sps:SPs1673"/>
<dbReference type="HOGENOM" id="CLU_013528_0_1_9"/>
<dbReference type="GO" id="GO:0005829">
    <property type="term" value="C:cytosol"/>
    <property type="evidence" value="ECO:0007669"/>
    <property type="project" value="TreeGrafter"/>
</dbReference>
<dbReference type="GO" id="GO:0005524">
    <property type="term" value="F:ATP binding"/>
    <property type="evidence" value="ECO:0007669"/>
    <property type="project" value="UniProtKB-UniRule"/>
</dbReference>
<dbReference type="GO" id="GO:0004817">
    <property type="term" value="F:cysteine-tRNA ligase activity"/>
    <property type="evidence" value="ECO:0007669"/>
    <property type="project" value="UniProtKB-UniRule"/>
</dbReference>
<dbReference type="GO" id="GO:0008270">
    <property type="term" value="F:zinc ion binding"/>
    <property type="evidence" value="ECO:0007669"/>
    <property type="project" value="UniProtKB-UniRule"/>
</dbReference>
<dbReference type="GO" id="GO:0006423">
    <property type="term" value="P:cysteinyl-tRNA aminoacylation"/>
    <property type="evidence" value="ECO:0007669"/>
    <property type="project" value="UniProtKB-UniRule"/>
</dbReference>
<dbReference type="CDD" id="cd00672">
    <property type="entry name" value="CysRS_core"/>
    <property type="match status" value="1"/>
</dbReference>
<dbReference type="FunFam" id="3.40.50.620:FF:000130">
    <property type="entry name" value="Cysteine--tRNA ligase"/>
    <property type="match status" value="1"/>
</dbReference>
<dbReference type="Gene3D" id="1.20.120.640">
    <property type="entry name" value="Anticodon-binding domain of a subclass of class I aminoacyl-tRNA synthetases"/>
    <property type="match status" value="1"/>
</dbReference>
<dbReference type="Gene3D" id="3.40.50.620">
    <property type="entry name" value="HUPs"/>
    <property type="match status" value="1"/>
</dbReference>
<dbReference type="HAMAP" id="MF_00041">
    <property type="entry name" value="Cys_tRNA_synth"/>
    <property type="match status" value="1"/>
</dbReference>
<dbReference type="InterPro" id="IPR015803">
    <property type="entry name" value="Cys-tRNA-ligase"/>
</dbReference>
<dbReference type="InterPro" id="IPR015273">
    <property type="entry name" value="Cys-tRNA-synt_Ia_DALR"/>
</dbReference>
<dbReference type="InterPro" id="IPR024909">
    <property type="entry name" value="Cys-tRNA/MSH_ligase"/>
</dbReference>
<dbReference type="InterPro" id="IPR056411">
    <property type="entry name" value="CysS_C"/>
</dbReference>
<dbReference type="InterPro" id="IPR014729">
    <property type="entry name" value="Rossmann-like_a/b/a_fold"/>
</dbReference>
<dbReference type="InterPro" id="IPR032678">
    <property type="entry name" value="tRNA-synt_1_cat_dom"/>
</dbReference>
<dbReference type="InterPro" id="IPR009080">
    <property type="entry name" value="tRNAsynth_Ia_anticodon-bd"/>
</dbReference>
<dbReference type="NCBIfam" id="TIGR00435">
    <property type="entry name" value="cysS"/>
    <property type="match status" value="1"/>
</dbReference>
<dbReference type="PANTHER" id="PTHR10890:SF3">
    <property type="entry name" value="CYSTEINE--TRNA LIGASE, CYTOPLASMIC"/>
    <property type="match status" value="1"/>
</dbReference>
<dbReference type="PANTHER" id="PTHR10890">
    <property type="entry name" value="CYSTEINYL-TRNA SYNTHETASE"/>
    <property type="match status" value="1"/>
</dbReference>
<dbReference type="Pfam" id="PF23493">
    <property type="entry name" value="CysS_C"/>
    <property type="match status" value="1"/>
</dbReference>
<dbReference type="Pfam" id="PF09190">
    <property type="entry name" value="DALR_2"/>
    <property type="match status" value="1"/>
</dbReference>
<dbReference type="Pfam" id="PF01406">
    <property type="entry name" value="tRNA-synt_1e"/>
    <property type="match status" value="1"/>
</dbReference>
<dbReference type="PRINTS" id="PR00983">
    <property type="entry name" value="TRNASYNTHCYS"/>
</dbReference>
<dbReference type="SMART" id="SM00840">
    <property type="entry name" value="DALR_2"/>
    <property type="match status" value="1"/>
</dbReference>
<dbReference type="SUPFAM" id="SSF47323">
    <property type="entry name" value="Anticodon-binding domain of a subclass of class I aminoacyl-tRNA synthetases"/>
    <property type="match status" value="1"/>
</dbReference>
<dbReference type="SUPFAM" id="SSF52374">
    <property type="entry name" value="Nucleotidylyl transferase"/>
    <property type="match status" value="1"/>
</dbReference>
<proteinExistence type="inferred from homology"/>
<protein>
    <recommendedName>
        <fullName evidence="1">Cysteine--tRNA ligase</fullName>
        <ecNumber evidence="1">6.1.1.16</ecNumber>
    </recommendedName>
    <alternativeName>
        <fullName evidence="1">Cysteinyl-tRNA synthetase</fullName>
        <shortName evidence="1">CysRS</shortName>
    </alternativeName>
</protein>
<accession>P0DG33</accession>
<accession>Q8K5T7</accession>
<name>SYC_STRPQ</name>